<feature type="chain" id="PRO_1000014691" description="Large ribosomal subunit protein bL31B">
    <location>
        <begin position="1"/>
        <end position="87"/>
    </location>
</feature>
<reference key="1">
    <citation type="journal article" date="2010" name="Genome Biol. Evol.">
        <title>Continuing evolution of Burkholderia mallei through genome reduction and large-scale rearrangements.</title>
        <authorList>
            <person name="Losada L."/>
            <person name="Ronning C.M."/>
            <person name="DeShazer D."/>
            <person name="Woods D."/>
            <person name="Fedorova N."/>
            <person name="Kim H.S."/>
            <person name="Shabalina S.A."/>
            <person name="Pearson T.R."/>
            <person name="Brinkac L."/>
            <person name="Tan P."/>
            <person name="Nandi T."/>
            <person name="Crabtree J."/>
            <person name="Badger J."/>
            <person name="Beckstrom-Sternberg S."/>
            <person name="Saqib M."/>
            <person name="Schutzer S.E."/>
            <person name="Keim P."/>
            <person name="Nierman W.C."/>
        </authorList>
    </citation>
    <scope>NUCLEOTIDE SEQUENCE [LARGE SCALE GENOMIC DNA]</scope>
    <source>
        <strain>1106a</strain>
    </source>
</reference>
<protein>
    <recommendedName>
        <fullName evidence="1">Large ribosomal subunit protein bL31B</fullName>
    </recommendedName>
    <alternativeName>
        <fullName evidence="2">50S ribosomal protein L31 type B</fullName>
    </alternativeName>
</protein>
<evidence type="ECO:0000255" key="1">
    <source>
        <dbReference type="HAMAP-Rule" id="MF_00502"/>
    </source>
</evidence>
<evidence type="ECO:0000305" key="2"/>
<accession>A3NVZ5</accession>
<sequence>MKQGIHPDYREVVFQDMSNGFKFITRSTIQTRETIEFEGKTYPLAKIEVSSESHSFYTGQQKIMDTAGRVEKFKNKFGARASGKAAK</sequence>
<gene>
    <name evidence="1" type="primary">rpmE2</name>
    <name type="ordered locus">BURPS1106A_2253</name>
</gene>
<proteinExistence type="inferred from homology"/>
<organism>
    <name type="scientific">Burkholderia pseudomallei (strain 1106a)</name>
    <dbReference type="NCBI Taxonomy" id="357348"/>
    <lineage>
        <taxon>Bacteria</taxon>
        <taxon>Pseudomonadati</taxon>
        <taxon>Pseudomonadota</taxon>
        <taxon>Betaproteobacteria</taxon>
        <taxon>Burkholderiales</taxon>
        <taxon>Burkholderiaceae</taxon>
        <taxon>Burkholderia</taxon>
        <taxon>pseudomallei group</taxon>
    </lineage>
</organism>
<name>RL31B_BURP0</name>
<keyword id="KW-0687">Ribonucleoprotein</keyword>
<keyword id="KW-0689">Ribosomal protein</keyword>
<comment type="subunit">
    <text evidence="1">Part of the 50S ribosomal subunit.</text>
</comment>
<comment type="similarity">
    <text evidence="1">Belongs to the bacterial ribosomal protein bL31 family. Type B subfamily.</text>
</comment>
<dbReference type="EMBL" id="CP000572">
    <property type="protein sequence ID" value="ABN91026.1"/>
    <property type="molecule type" value="Genomic_DNA"/>
</dbReference>
<dbReference type="RefSeq" id="WP_004193070.1">
    <property type="nucleotide sequence ID" value="NC_009076.1"/>
</dbReference>
<dbReference type="SMR" id="A3NVZ5"/>
<dbReference type="KEGG" id="bpl:BURPS1106A_2253"/>
<dbReference type="HOGENOM" id="CLU_114306_2_1_4"/>
<dbReference type="Proteomes" id="UP000006738">
    <property type="component" value="Chromosome I"/>
</dbReference>
<dbReference type="GO" id="GO:1990904">
    <property type="term" value="C:ribonucleoprotein complex"/>
    <property type="evidence" value="ECO:0007669"/>
    <property type="project" value="UniProtKB-KW"/>
</dbReference>
<dbReference type="GO" id="GO:0005840">
    <property type="term" value="C:ribosome"/>
    <property type="evidence" value="ECO:0007669"/>
    <property type="project" value="UniProtKB-KW"/>
</dbReference>
<dbReference type="GO" id="GO:0003735">
    <property type="term" value="F:structural constituent of ribosome"/>
    <property type="evidence" value="ECO:0007669"/>
    <property type="project" value="InterPro"/>
</dbReference>
<dbReference type="GO" id="GO:0006412">
    <property type="term" value="P:translation"/>
    <property type="evidence" value="ECO:0007669"/>
    <property type="project" value="UniProtKB-UniRule"/>
</dbReference>
<dbReference type="Gene3D" id="4.10.830.30">
    <property type="entry name" value="Ribosomal protein L31"/>
    <property type="match status" value="1"/>
</dbReference>
<dbReference type="HAMAP" id="MF_00502">
    <property type="entry name" value="Ribosomal_bL31_2"/>
    <property type="match status" value="1"/>
</dbReference>
<dbReference type="InterPro" id="IPR034704">
    <property type="entry name" value="Ribosomal_bL28/bL31-like_sf"/>
</dbReference>
<dbReference type="InterPro" id="IPR002150">
    <property type="entry name" value="Ribosomal_bL31"/>
</dbReference>
<dbReference type="InterPro" id="IPR027493">
    <property type="entry name" value="Ribosomal_bL31_B"/>
</dbReference>
<dbReference type="InterPro" id="IPR042105">
    <property type="entry name" value="Ribosomal_bL31_sf"/>
</dbReference>
<dbReference type="NCBIfam" id="TIGR00105">
    <property type="entry name" value="L31"/>
    <property type="match status" value="1"/>
</dbReference>
<dbReference type="NCBIfam" id="NF002462">
    <property type="entry name" value="PRK01678.1"/>
    <property type="match status" value="1"/>
</dbReference>
<dbReference type="PANTHER" id="PTHR33280">
    <property type="entry name" value="50S RIBOSOMAL PROTEIN L31, CHLOROPLASTIC"/>
    <property type="match status" value="1"/>
</dbReference>
<dbReference type="PANTHER" id="PTHR33280:SF1">
    <property type="entry name" value="LARGE RIBOSOMAL SUBUNIT PROTEIN BL31C"/>
    <property type="match status" value="1"/>
</dbReference>
<dbReference type="Pfam" id="PF01197">
    <property type="entry name" value="Ribosomal_L31"/>
    <property type="match status" value="1"/>
</dbReference>
<dbReference type="PRINTS" id="PR01249">
    <property type="entry name" value="RIBOSOMALL31"/>
</dbReference>
<dbReference type="SUPFAM" id="SSF143800">
    <property type="entry name" value="L28p-like"/>
    <property type="match status" value="1"/>
</dbReference>